<sequence length="379" mass="43186">MEYGEEPSIKRFLMLPDDLVFNCLARVSRLHYPTLSLVSKKFRFLLASKELYQTRILLGGTESCLYVCVRLHTDSEQLHWFIIYQGPNSSKKVLVPISSPNFTSAALPGFVVVGHEIYAIGGGSENKNASINATGSKTYNALSSVMVMDSRSHTWREAPSMRVARVFPSACTLDGRIYVTGGCENLNSMNWMEIFDTKTQTWEFLQIPSEEVCKGSEYLSISYQRTVYVGSREKDVTYKMHKGKWRGADICLNHGWSLDPSSCCVIENVFYRCSLGDVRWYDLKKREWAALKGLEGLPTFTNYYRNFKSADHCGKLAISWEEYVLVDDETKIWCAEIAIQKRQNGEIWGTLEWFDNVFISSGPNRHVDLLVNALTATVW</sequence>
<name>FBK92_ARATH</name>
<accession>Q1PE27</accession>
<accession>O81758</accession>
<dbReference type="EMBL" id="AL031032">
    <property type="protein sequence ID" value="CAA19872.1"/>
    <property type="status" value="ALT_SEQ"/>
    <property type="molecule type" value="Genomic_DNA"/>
</dbReference>
<dbReference type="EMBL" id="AL161584">
    <property type="protein sequence ID" value="CAB80107.1"/>
    <property type="status" value="ALT_SEQ"/>
    <property type="molecule type" value="Genomic_DNA"/>
</dbReference>
<dbReference type="EMBL" id="CP002687">
    <property type="protein sequence ID" value="AEE86290.1"/>
    <property type="molecule type" value="Genomic_DNA"/>
</dbReference>
<dbReference type="EMBL" id="DQ446891">
    <property type="protein sequence ID" value="ABE66108.1"/>
    <property type="molecule type" value="mRNA"/>
</dbReference>
<dbReference type="PIR" id="T05218">
    <property type="entry name" value="T05218"/>
</dbReference>
<dbReference type="RefSeq" id="NP_567939.1">
    <property type="nucleotide sequence ID" value="NM_119548.1"/>
</dbReference>
<dbReference type="SMR" id="Q1PE27"/>
<dbReference type="PaxDb" id="3702-AT4G33900.1"/>
<dbReference type="EnsemblPlants" id="AT4G33900.1">
    <property type="protein sequence ID" value="AT4G33900.1"/>
    <property type="gene ID" value="AT4G33900"/>
</dbReference>
<dbReference type="GeneID" id="829533"/>
<dbReference type="Gramene" id="AT4G33900.1">
    <property type="protein sequence ID" value="AT4G33900.1"/>
    <property type="gene ID" value="AT4G33900"/>
</dbReference>
<dbReference type="KEGG" id="ath:AT4G33900"/>
<dbReference type="Araport" id="AT4G33900"/>
<dbReference type="TAIR" id="AT4G33900"/>
<dbReference type="eggNOG" id="KOG1072">
    <property type="taxonomic scope" value="Eukaryota"/>
</dbReference>
<dbReference type="HOGENOM" id="CLU_032521_1_2_1"/>
<dbReference type="InParanoid" id="Q1PE27"/>
<dbReference type="OMA" id="FRRTESC"/>
<dbReference type="OrthoDB" id="1079171at2759"/>
<dbReference type="PhylomeDB" id="Q1PE27"/>
<dbReference type="PRO" id="PR:Q1PE27"/>
<dbReference type="Proteomes" id="UP000006548">
    <property type="component" value="Chromosome 4"/>
</dbReference>
<dbReference type="ExpressionAtlas" id="Q1PE27">
    <property type="expression patterns" value="baseline and differential"/>
</dbReference>
<dbReference type="CDD" id="cd22152">
    <property type="entry name" value="F-box_AtAFR-like"/>
    <property type="match status" value="1"/>
</dbReference>
<dbReference type="Gene3D" id="2.120.10.80">
    <property type="entry name" value="Kelch-type beta propeller"/>
    <property type="match status" value="1"/>
</dbReference>
<dbReference type="InterPro" id="IPR036047">
    <property type="entry name" value="F-box-like_dom_sf"/>
</dbReference>
<dbReference type="InterPro" id="IPR050354">
    <property type="entry name" value="F-box/kelch-repeat_ARATH"/>
</dbReference>
<dbReference type="InterPro" id="IPR001810">
    <property type="entry name" value="F-box_dom"/>
</dbReference>
<dbReference type="InterPro" id="IPR015915">
    <property type="entry name" value="Kelch-typ_b-propeller"/>
</dbReference>
<dbReference type="InterPro" id="IPR006652">
    <property type="entry name" value="Kelch_1"/>
</dbReference>
<dbReference type="PANTHER" id="PTHR24414">
    <property type="entry name" value="F-BOX/KELCH-REPEAT PROTEIN SKIP4"/>
    <property type="match status" value="1"/>
</dbReference>
<dbReference type="PANTHER" id="PTHR24414:SF184">
    <property type="entry name" value="GALACTOSE OXIDASE_KELCH REPEAT SUPERFAMILY PROTEIN"/>
    <property type="match status" value="1"/>
</dbReference>
<dbReference type="Pfam" id="PF00646">
    <property type="entry name" value="F-box"/>
    <property type="match status" value="1"/>
</dbReference>
<dbReference type="Pfam" id="PF25210">
    <property type="entry name" value="Kelch_FKB95"/>
    <property type="match status" value="1"/>
</dbReference>
<dbReference type="SMART" id="SM00256">
    <property type="entry name" value="FBOX"/>
    <property type="match status" value="1"/>
</dbReference>
<dbReference type="SMART" id="SM00612">
    <property type="entry name" value="Kelch"/>
    <property type="match status" value="2"/>
</dbReference>
<dbReference type="SUPFAM" id="SSF81383">
    <property type="entry name" value="F-box domain"/>
    <property type="match status" value="1"/>
</dbReference>
<dbReference type="SUPFAM" id="SSF117281">
    <property type="entry name" value="Kelch motif"/>
    <property type="match status" value="1"/>
</dbReference>
<dbReference type="PROSITE" id="PS50181">
    <property type="entry name" value="FBOX"/>
    <property type="match status" value="1"/>
</dbReference>
<proteinExistence type="evidence at transcript level"/>
<protein>
    <recommendedName>
        <fullName>F-box/kelch-repeat protein At4g33900</fullName>
    </recommendedName>
</protein>
<reference key="1">
    <citation type="journal article" date="1999" name="Nature">
        <title>Sequence and analysis of chromosome 4 of the plant Arabidopsis thaliana.</title>
        <authorList>
            <person name="Mayer K.F.X."/>
            <person name="Schueller C."/>
            <person name="Wambutt R."/>
            <person name="Murphy G."/>
            <person name="Volckaert G."/>
            <person name="Pohl T."/>
            <person name="Duesterhoeft A."/>
            <person name="Stiekema W."/>
            <person name="Entian K.-D."/>
            <person name="Terryn N."/>
            <person name="Harris B."/>
            <person name="Ansorge W."/>
            <person name="Brandt P."/>
            <person name="Grivell L.A."/>
            <person name="Rieger M."/>
            <person name="Weichselgartner M."/>
            <person name="de Simone V."/>
            <person name="Obermaier B."/>
            <person name="Mache R."/>
            <person name="Mueller M."/>
            <person name="Kreis M."/>
            <person name="Delseny M."/>
            <person name="Puigdomenech P."/>
            <person name="Watson M."/>
            <person name="Schmidtheini T."/>
            <person name="Reichert B."/>
            <person name="Portetelle D."/>
            <person name="Perez-Alonso M."/>
            <person name="Boutry M."/>
            <person name="Bancroft I."/>
            <person name="Vos P."/>
            <person name="Hoheisel J."/>
            <person name="Zimmermann W."/>
            <person name="Wedler H."/>
            <person name="Ridley P."/>
            <person name="Langham S.-A."/>
            <person name="McCullagh B."/>
            <person name="Bilham L."/>
            <person name="Robben J."/>
            <person name="van der Schueren J."/>
            <person name="Grymonprez B."/>
            <person name="Chuang Y.-J."/>
            <person name="Vandenbussche F."/>
            <person name="Braeken M."/>
            <person name="Weltjens I."/>
            <person name="Voet M."/>
            <person name="Bastiaens I."/>
            <person name="Aert R."/>
            <person name="Defoor E."/>
            <person name="Weitzenegger T."/>
            <person name="Bothe G."/>
            <person name="Ramsperger U."/>
            <person name="Hilbert H."/>
            <person name="Braun M."/>
            <person name="Holzer E."/>
            <person name="Brandt A."/>
            <person name="Peters S."/>
            <person name="van Staveren M."/>
            <person name="Dirkse W."/>
            <person name="Mooijman P."/>
            <person name="Klein Lankhorst R."/>
            <person name="Rose M."/>
            <person name="Hauf J."/>
            <person name="Koetter P."/>
            <person name="Berneiser S."/>
            <person name="Hempel S."/>
            <person name="Feldpausch M."/>
            <person name="Lamberth S."/>
            <person name="Van den Daele H."/>
            <person name="De Keyser A."/>
            <person name="Buysshaert C."/>
            <person name="Gielen J."/>
            <person name="Villarroel R."/>
            <person name="De Clercq R."/>
            <person name="van Montagu M."/>
            <person name="Rogers J."/>
            <person name="Cronin A."/>
            <person name="Quail M.A."/>
            <person name="Bray-Allen S."/>
            <person name="Clark L."/>
            <person name="Doggett J."/>
            <person name="Hall S."/>
            <person name="Kay M."/>
            <person name="Lennard N."/>
            <person name="McLay K."/>
            <person name="Mayes R."/>
            <person name="Pettett A."/>
            <person name="Rajandream M.A."/>
            <person name="Lyne M."/>
            <person name="Benes V."/>
            <person name="Rechmann S."/>
            <person name="Borkova D."/>
            <person name="Bloecker H."/>
            <person name="Scharfe M."/>
            <person name="Grimm M."/>
            <person name="Loehnert T.-H."/>
            <person name="Dose S."/>
            <person name="de Haan M."/>
            <person name="Maarse A.C."/>
            <person name="Schaefer M."/>
            <person name="Mueller-Auer S."/>
            <person name="Gabel C."/>
            <person name="Fuchs M."/>
            <person name="Fartmann B."/>
            <person name="Granderath K."/>
            <person name="Dauner D."/>
            <person name="Herzl A."/>
            <person name="Neumann S."/>
            <person name="Argiriou A."/>
            <person name="Vitale D."/>
            <person name="Liguori R."/>
            <person name="Piravandi E."/>
            <person name="Massenet O."/>
            <person name="Quigley F."/>
            <person name="Clabauld G."/>
            <person name="Muendlein A."/>
            <person name="Felber R."/>
            <person name="Schnabl S."/>
            <person name="Hiller R."/>
            <person name="Schmidt W."/>
            <person name="Lecharny A."/>
            <person name="Aubourg S."/>
            <person name="Chefdor F."/>
            <person name="Cooke R."/>
            <person name="Berger C."/>
            <person name="Monfort A."/>
            <person name="Casacuberta E."/>
            <person name="Gibbons T."/>
            <person name="Weber N."/>
            <person name="Vandenbol M."/>
            <person name="Bargues M."/>
            <person name="Terol J."/>
            <person name="Torres A."/>
            <person name="Perez-Perez A."/>
            <person name="Purnelle B."/>
            <person name="Bent E."/>
            <person name="Johnson S."/>
            <person name="Tacon D."/>
            <person name="Jesse T."/>
            <person name="Heijnen L."/>
            <person name="Schwarz S."/>
            <person name="Scholler P."/>
            <person name="Heber S."/>
            <person name="Francs P."/>
            <person name="Bielke C."/>
            <person name="Frishman D."/>
            <person name="Haase D."/>
            <person name="Lemcke K."/>
            <person name="Mewes H.-W."/>
            <person name="Stocker S."/>
            <person name="Zaccaria P."/>
            <person name="Bevan M."/>
            <person name="Wilson R.K."/>
            <person name="de la Bastide M."/>
            <person name="Habermann K."/>
            <person name="Parnell L."/>
            <person name="Dedhia N."/>
            <person name="Gnoj L."/>
            <person name="Schutz K."/>
            <person name="Huang E."/>
            <person name="Spiegel L."/>
            <person name="Sekhon M."/>
            <person name="Murray J."/>
            <person name="Sheet P."/>
            <person name="Cordes M."/>
            <person name="Abu-Threideh J."/>
            <person name="Stoneking T."/>
            <person name="Kalicki J."/>
            <person name="Graves T."/>
            <person name="Harmon G."/>
            <person name="Edwards J."/>
            <person name="Latreille P."/>
            <person name="Courtney L."/>
            <person name="Cloud J."/>
            <person name="Abbott A."/>
            <person name="Scott K."/>
            <person name="Johnson D."/>
            <person name="Minx P."/>
            <person name="Bentley D."/>
            <person name="Fulton B."/>
            <person name="Miller N."/>
            <person name="Greco T."/>
            <person name="Kemp K."/>
            <person name="Kramer J."/>
            <person name="Fulton L."/>
            <person name="Mardis E."/>
            <person name="Dante M."/>
            <person name="Pepin K."/>
            <person name="Hillier L.W."/>
            <person name="Nelson J."/>
            <person name="Spieth J."/>
            <person name="Ryan E."/>
            <person name="Andrews S."/>
            <person name="Geisel C."/>
            <person name="Layman D."/>
            <person name="Du H."/>
            <person name="Ali J."/>
            <person name="Berghoff A."/>
            <person name="Jones K."/>
            <person name="Drone K."/>
            <person name="Cotton M."/>
            <person name="Joshu C."/>
            <person name="Antonoiu B."/>
            <person name="Zidanic M."/>
            <person name="Strong C."/>
            <person name="Sun H."/>
            <person name="Lamar B."/>
            <person name="Yordan C."/>
            <person name="Ma P."/>
            <person name="Zhong J."/>
            <person name="Preston R."/>
            <person name="Vil D."/>
            <person name="Shekher M."/>
            <person name="Matero A."/>
            <person name="Shah R."/>
            <person name="Swaby I.K."/>
            <person name="O'Shaughnessy A."/>
            <person name="Rodriguez M."/>
            <person name="Hoffman J."/>
            <person name="Till S."/>
            <person name="Granat S."/>
            <person name="Shohdy N."/>
            <person name="Hasegawa A."/>
            <person name="Hameed A."/>
            <person name="Lodhi M."/>
            <person name="Johnson A."/>
            <person name="Chen E."/>
            <person name="Marra M.A."/>
            <person name="Martienssen R."/>
            <person name="McCombie W.R."/>
        </authorList>
    </citation>
    <scope>NUCLEOTIDE SEQUENCE [LARGE SCALE GENOMIC DNA]</scope>
    <source>
        <strain>cv. Columbia</strain>
    </source>
</reference>
<reference key="2">
    <citation type="journal article" date="2017" name="Plant J.">
        <title>Araport11: a complete reannotation of the Arabidopsis thaliana reference genome.</title>
        <authorList>
            <person name="Cheng C.Y."/>
            <person name="Krishnakumar V."/>
            <person name="Chan A.P."/>
            <person name="Thibaud-Nissen F."/>
            <person name="Schobel S."/>
            <person name="Town C.D."/>
        </authorList>
    </citation>
    <scope>GENOME REANNOTATION</scope>
    <source>
        <strain>cv. Columbia</strain>
    </source>
</reference>
<reference key="3">
    <citation type="journal article" date="2006" name="Plant Biotechnol. J.">
        <title>Simultaneous high-throughput recombinational cloning of open reading frames in closed and open configurations.</title>
        <authorList>
            <person name="Underwood B.A."/>
            <person name="Vanderhaeghen R."/>
            <person name="Whitford R."/>
            <person name="Town C.D."/>
            <person name="Hilson P."/>
        </authorList>
    </citation>
    <scope>NUCLEOTIDE SEQUENCE [LARGE SCALE MRNA]</scope>
    <source>
        <strain>cv. Columbia</strain>
    </source>
</reference>
<keyword id="KW-0880">Kelch repeat</keyword>
<keyword id="KW-1185">Reference proteome</keyword>
<keyword id="KW-0677">Repeat</keyword>
<comment type="sequence caution" evidence="2">
    <conflict type="erroneous gene model prediction">
        <sequence resource="EMBL-CDS" id="CAA19872"/>
    </conflict>
</comment>
<comment type="sequence caution" evidence="2">
    <conflict type="erroneous gene model prediction">
        <sequence resource="EMBL-CDS" id="CAB80107"/>
    </conflict>
</comment>
<evidence type="ECO:0000255" key="1">
    <source>
        <dbReference type="PROSITE-ProRule" id="PRU00080"/>
    </source>
</evidence>
<evidence type="ECO:0000305" key="2"/>
<gene>
    <name type="ordered locus">At4g33900</name>
    <name type="ORF">F17I5.90</name>
</gene>
<feature type="chain" id="PRO_0000283250" description="F-box/kelch-repeat protein At4g33900">
    <location>
        <begin position="1"/>
        <end position="379"/>
    </location>
</feature>
<feature type="domain" description="F-box" evidence="1">
    <location>
        <begin position="9"/>
        <end position="55"/>
    </location>
</feature>
<feature type="repeat" description="Kelch 1">
    <location>
        <begin position="116"/>
        <end position="175"/>
    </location>
</feature>
<feature type="repeat" description="Kelch 2">
    <location>
        <begin position="176"/>
        <end position="222"/>
    </location>
</feature>
<feature type="repeat" description="Kelch 3">
    <location>
        <begin position="262"/>
        <end position="308"/>
    </location>
</feature>
<organism>
    <name type="scientific">Arabidopsis thaliana</name>
    <name type="common">Mouse-ear cress</name>
    <dbReference type="NCBI Taxonomy" id="3702"/>
    <lineage>
        <taxon>Eukaryota</taxon>
        <taxon>Viridiplantae</taxon>
        <taxon>Streptophyta</taxon>
        <taxon>Embryophyta</taxon>
        <taxon>Tracheophyta</taxon>
        <taxon>Spermatophyta</taxon>
        <taxon>Magnoliopsida</taxon>
        <taxon>eudicotyledons</taxon>
        <taxon>Gunneridae</taxon>
        <taxon>Pentapetalae</taxon>
        <taxon>rosids</taxon>
        <taxon>malvids</taxon>
        <taxon>Brassicales</taxon>
        <taxon>Brassicaceae</taxon>
        <taxon>Camelineae</taxon>
        <taxon>Arabidopsis</taxon>
    </lineage>
</organism>